<organism>
    <name type="scientific">Chelativorans sp. (strain BNC1)</name>
    <dbReference type="NCBI Taxonomy" id="266779"/>
    <lineage>
        <taxon>Bacteria</taxon>
        <taxon>Pseudomonadati</taxon>
        <taxon>Pseudomonadota</taxon>
        <taxon>Alphaproteobacteria</taxon>
        <taxon>Hyphomicrobiales</taxon>
        <taxon>Phyllobacteriaceae</taxon>
        <taxon>Chelativorans</taxon>
    </lineage>
</organism>
<feature type="chain" id="PRO_1000187877" description="Beta-ketoacyl-[acyl-carrier-protein] synthase III">
    <location>
        <begin position="1"/>
        <end position="323"/>
    </location>
</feature>
<feature type="region of interest" description="ACP-binding" evidence="1">
    <location>
        <begin position="251"/>
        <end position="255"/>
    </location>
</feature>
<feature type="active site" evidence="1">
    <location>
        <position position="113"/>
    </location>
</feature>
<feature type="active site" evidence="1">
    <location>
        <position position="250"/>
    </location>
</feature>
<feature type="active site" evidence="1">
    <location>
        <position position="280"/>
    </location>
</feature>
<sequence>MIRSTVRGVGAALPRRVVTNKDLETRLETSDEWIVQRTGIRQRHIASDDETTASLGEAAALRALDAAGLAPADIDLIVVATSTPNNTFPATAVEIQERLGIRQGFAFDMQAVCSGFVYAVTTADLYIRGGMAKRALVIGAETFSRILDWTDRTTCVLFGDGAGAIVLEAEEGQGDISDRGILAEALRSDGSHKEKLYVDGGPSTTRTVGHLRMQGREVFKHAVGMITDVIEDVFGQAGITAEDIDWFVSHQANKRIIDASAKKLGIAEEKVVITVDLHGNTSAASVPLALNHAVSQGKIQKGDLVLLEAMGGGFTWGAVLLRW</sequence>
<name>FABH_CHESB</name>
<comment type="function">
    <text evidence="1">Catalyzes the condensation reaction of fatty acid synthesis by the addition to an acyl acceptor of two carbons from malonyl-ACP. Catalyzes the first condensation reaction which initiates fatty acid synthesis and may therefore play a role in governing the total rate of fatty acid production. Possesses both acetoacetyl-ACP synthase and acetyl transacylase activities. Its substrate specificity determines the biosynthesis of branched-chain and/or straight-chain of fatty acids.</text>
</comment>
<comment type="catalytic activity">
    <reaction evidence="1">
        <text>malonyl-[ACP] + acetyl-CoA + H(+) = 3-oxobutanoyl-[ACP] + CO2 + CoA</text>
        <dbReference type="Rhea" id="RHEA:12080"/>
        <dbReference type="Rhea" id="RHEA-COMP:9623"/>
        <dbReference type="Rhea" id="RHEA-COMP:9625"/>
        <dbReference type="ChEBI" id="CHEBI:15378"/>
        <dbReference type="ChEBI" id="CHEBI:16526"/>
        <dbReference type="ChEBI" id="CHEBI:57287"/>
        <dbReference type="ChEBI" id="CHEBI:57288"/>
        <dbReference type="ChEBI" id="CHEBI:78449"/>
        <dbReference type="ChEBI" id="CHEBI:78450"/>
        <dbReference type="EC" id="2.3.1.180"/>
    </reaction>
</comment>
<comment type="pathway">
    <text evidence="1">Lipid metabolism; fatty acid biosynthesis.</text>
</comment>
<comment type="subunit">
    <text evidence="1">Homodimer.</text>
</comment>
<comment type="subcellular location">
    <subcellularLocation>
        <location evidence="1">Cytoplasm</location>
    </subcellularLocation>
</comment>
<comment type="domain">
    <text evidence="1">The last Arg residue of the ACP-binding site is essential for the weak association between ACP/AcpP and FabH.</text>
</comment>
<comment type="similarity">
    <text evidence="1">Belongs to the thiolase-like superfamily. FabH family.</text>
</comment>
<keyword id="KW-0012">Acyltransferase</keyword>
<keyword id="KW-0963">Cytoplasm</keyword>
<keyword id="KW-0275">Fatty acid biosynthesis</keyword>
<keyword id="KW-0276">Fatty acid metabolism</keyword>
<keyword id="KW-0444">Lipid biosynthesis</keyword>
<keyword id="KW-0443">Lipid metabolism</keyword>
<keyword id="KW-0511">Multifunctional enzyme</keyword>
<keyword id="KW-0808">Transferase</keyword>
<reference key="1">
    <citation type="submission" date="2006-06" db="EMBL/GenBank/DDBJ databases">
        <title>Complete sequence of chromosome of Mesorhizobium sp. BNC1.</title>
        <authorList>
            <consortium name="US DOE Joint Genome Institute"/>
            <person name="Copeland A."/>
            <person name="Lucas S."/>
            <person name="Lapidus A."/>
            <person name="Barry K."/>
            <person name="Detter J.C."/>
            <person name="Glavina del Rio T."/>
            <person name="Hammon N."/>
            <person name="Israni S."/>
            <person name="Dalin E."/>
            <person name="Tice H."/>
            <person name="Pitluck S."/>
            <person name="Chertkov O."/>
            <person name="Brettin T."/>
            <person name="Bruce D."/>
            <person name="Han C."/>
            <person name="Tapia R."/>
            <person name="Gilna P."/>
            <person name="Schmutz J."/>
            <person name="Larimer F."/>
            <person name="Land M."/>
            <person name="Hauser L."/>
            <person name="Kyrpides N."/>
            <person name="Mikhailova N."/>
            <person name="Richardson P."/>
        </authorList>
    </citation>
    <scope>NUCLEOTIDE SEQUENCE [LARGE SCALE GENOMIC DNA]</scope>
    <source>
        <strain>BNC1</strain>
    </source>
</reference>
<proteinExistence type="inferred from homology"/>
<accession>Q11J83</accession>
<gene>
    <name evidence="1" type="primary">fabH</name>
    <name type="ordered locus">Meso_1146</name>
</gene>
<dbReference type="EC" id="2.3.1.180" evidence="1"/>
<dbReference type="EMBL" id="CP000390">
    <property type="protein sequence ID" value="ABG62542.1"/>
    <property type="molecule type" value="Genomic_DNA"/>
</dbReference>
<dbReference type="SMR" id="Q11J83"/>
<dbReference type="STRING" id="266779.Meso_1146"/>
<dbReference type="KEGG" id="mes:Meso_1146"/>
<dbReference type="eggNOG" id="COG0332">
    <property type="taxonomic scope" value="Bacteria"/>
</dbReference>
<dbReference type="HOGENOM" id="CLU_039592_3_1_5"/>
<dbReference type="OrthoDB" id="9815506at2"/>
<dbReference type="UniPathway" id="UPA00094"/>
<dbReference type="GO" id="GO:0005737">
    <property type="term" value="C:cytoplasm"/>
    <property type="evidence" value="ECO:0007669"/>
    <property type="project" value="UniProtKB-SubCell"/>
</dbReference>
<dbReference type="GO" id="GO:0004315">
    <property type="term" value="F:3-oxoacyl-[acyl-carrier-protein] synthase activity"/>
    <property type="evidence" value="ECO:0007669"/>
    <property type="project" value="InterPro"/>
</dbReference>
<dbReference type="GO" id="GO:0033818">
    <property type="term" value="F:beta-ketoacyl-acyl-carrier-protein synthase III activity"/>
    <property type="evidence" value="ECO:0007669"/>
    <property type="project" value="UniProtKB-UniRule"/>
</dbReference>
<dbReference type="GO" id="GO:0006633">
    <property type="term" value="P:fatty acid biosynthetic process"/>
    <property type="evidence" value="ECO:0007669"/>
    <property type="project" value="UniProtKB-UniRule"/>
</dbReference>
<dbReference type="GO" id="GO:0044550">
    <property type="term" value="P:secondary metabolite biosynthetic process"/>
    <property type="evidence" value="ECO:0007669"/>
    <property type="project" value="TreeGrafter"/>
</dbReference>
<dbReference type="CDD" id="cd00830">
    <property type="entry name" value="KAS_III"/>
    <property type="match status" value="1"/>
</dbReference>
<dbReference type="FunFam" id="3.40.47.10:FF:000004">
    <property type="entry name" value="3-oxoacyl-[acyl-carrier-protein] synthase 3"/>
    <property type="match status" value="1"/>
</dbReference>
<dbReference type="Gene3D" id="3.40.47.10">
    <property type="match status" value="1"/>
</dbReference>
<dbReference type="HAMAP" id="MF_01815">
    <property type="entry name" value="FabH"/>
    <property type="match status" value="1"/>
</dbReference>
<dbReference type="InterPro" id="IPR013747">
    <property type="entry name" value="ACP_syn_III_C"/>
</dbReference>
<dbReference type="InterPro" id="IPR013751">
    <property type="entry name" value="ACP_syn_III_N"/>
</dbReference>
<dbReference type="InterPro" id="IPR004655">
    <property type="entry name" value="FabH"/>
</dbReference>
<dbReference type="InterPro" id="IPR016039">
    <property type="entry name" value="Thiolase-like"/>
</dbReference>
<dbReference type="NCBIfam" id="TIGR00747">
    <property type="entry name" value="fabH"/>
    <property type="match status" value="1"/>
</dbReference>
<dbReference type="NCBIfam" id="NF006829">
    <property type="entry name" value="PRK09352.1"/>
    <property type="match status" value="1"/>
</dbReference>
<dbReference type="PANTHER" id="PTHR34069">
    <property type="entry name" value="3-OXOACYL-[ACYL-CARRIER-PROTEIN] SYNTHASE 3"/>
    <property type="match status" value="1"/>
</dbReference>
<dbReference type="PANTHER" id="PTHR34069:SF2">
    <property type="entry name" value="BETA-KETOACYL-[ACYL-CARRIER-PROTEIN] SYNTHASE III"/>
    <property type="match status" value="1"/>
</dbReference>
<dbReference type="Pfam" id="PF08545">
    <property type="entry name" value="ACP_syn_III"/>
    <property type="match status" value="1"/>
</dbReference>
<dbReference type="Pfam" id="PF08541">
    <property type="entry name" value="ACP_syn_III_C"/>
    <property type="match status" value="1"/>
</dbReference>
<dbReference type="SUPFAM" id="SSF53901">
    <property type="entry name" value="Thiolase-like"/>
    <property type="match status" value="1"/>
</dbReference>
<evidence type="ECO:0000255" key="1">
    <source>
        <dbReference type="HAMAP-Rule" id="MF_01815"/>
    </source>
</evidence>
<protein>
    <recommendedName>
        <fullName evidence="1">Beta-ketoacyl-[acyl-carrier-protein] synthase III</fullName>
        <shortName evidence="1">Beta-ketoacyl-ACP synthase III</shortName>
        <shortName evidence="1">KAS III</shortName>
        <ecNumber evidence="1">2.3.1.180</ecNumber>
    </recommendedName>
    <alternativeName>
        <fullName evidence="1">3-oxoacyl-[acyl-carrier-protein] synthase 3</fullName>
    </alternativeName>
    <alternativeName>
        <fullName evidence="1">3-oxoacyl-[acyl-carrier-protein] synthase III</fullName>
    </alternativeName>
</protein>